<keyword id="KW-1003">Cell membrane</keyword>
<keyword id="KW-0963">Cytoplasm</keyword>
<keyword id="KW-1015">Disulfide bond</keyword>
<keyword id="KW-0297">G-protein coupled receptor</keyword>
<keyword id="KW-0325">Glycoprotein</keyword>
<keyword id="KW-0449">Lipoprotein</keyword>
<keyword id="KW-0472">Membrane</keyword>
<keyword id="KW-0539">Nucleus</keyword>
<keyword id="KW-0564">Palmitate</keyword>
<keyword id="KW-0597">Phosphoprotein</keyword>
<keyword id="KW-1267">Proteomics identification</keyword>
<keyword id="KW-0675">Receptor</keyword>
<keyword id="KW-1185">Reference proteome</keyword>
<keyword id="KW-0807">Transducer</keyword>
<keyword id="KW-0812">Transmembrane</keyword>
<keyword id="KW-1133">Transmembrane helix</keyword>
<evidence type="ECO:0000250" key="1"/>
<evidence type="ECO:0000250" key="2">
    <source>
        <dbReference type="UniProtKB" id="P97717"/>
    </source>
</evidence>
<evidence type="ECO:0000255" key="3"/>
<evidence type="ECO:0000255" key="4">
    <source>
        <dbReference type="PROSITE-ProRule" id="PRU00521"/>
    </source>
</evidence>
<evidence type="ECO:0000256" key="5">
    <source>
        <dbReference type="SAM" id="MobiDB-lite"/>
    </source>
</evidence>
<evidence type="ECO:0000269" key="6">
    <source>
    </source>
</evidence>
<evidence type="ECO:0000269" key="7">
    <source>
    </source>
</evidence>
<evidence type="ECO:0000269" key="8">
    <source>
    </source>
</evidence>
<evidence type="ECO:0000305" key="9"/>
<accession>P35368</accession>
<accession>B0LPE1</accession>
<name>ADA1B_HUMAN</name>
<dbReference type="EMBL" id="M99589">
    <property type="status" value="NOT_ANNOTATED_CDS"/>
    <property type="molecule type" value="Genomic_DNA"/>
</dbReference>
<dbReference type="EMBL" id="M99590">
    <property type="status" value="NOT_ANNOTATED_CDS"/>
    <property type="molecule type" value="Genomic_DNA"/>
</dbReference>
<dbReference type="EMBL" id="U03865">
    <property type="protein sequence ID" value="AAB60352.1"/>
    <property type="molecule type" value="mRNA"/>
</dbReference>
<dbReference type="EMBL" id="L31773">
    <property type="protein sequence ID" value="AAB59485.1"/>
    <property type="molecule type" value="mRNA"/>
</dbReference>
<dbReference type="EMBL" id="EU332831">
    <property type="protein sequence ID" value="ABY87520.1"/>
    <property type="molecule type" value="Genomic_DNA"/>
</dbReference>
<dbReference type="EMBL" id="BC136568">
    <property type="protein sequence ID" value="AAI36569.1"/>
    <property type="molecule type" value="mRNA"/>
</dbReference>
<dbReference type="EMBL" id="BC136569">
    <property type="protein sequence ID" value="AAI36570.1"/>
    <property type="molecule type" value="mRNA"/>
</dbReference>
<dbReference type="CCDS" id="CCDS4347.1"/>
<dbReference type="PIR" id="A45121">
    <property type="entry name" value="A45121"/>
</dbReference>
<dbReference type="RefSeq" id="NP_000670.1">
    <property type="nucleotide sequence ID" value="NM_000679.4"/>
</dbReference>
<dbReference type="SMR" id="P35368"/>
<dbReference type="BioGRID" id="106657">
    <property type="interactions" value="8"/>
</dbReference>
<dbReference type="CORUM" id="P35368"/>
<dbReference type="DIP" id="DIP-33399N"/>
<dbReference type="FunCoup" id="P35368">
    <property type="interactions" value="1669"/>
</dbReference>
<dbReference type="IntAct" id="P35368">
    <property type="interactions" value="9"/>
</dbReference>
<dbReference type="MINT" id="P35368"/>
<dbReference type="STRING" id="9606.ENSP00000306662"/>
<dbReference type="BindingDB" id="P35368"/>
<dbReference type="ChEMBL" id="CHEMBL232"/>
<dbReference type="DrugBank" id="DB01614">
    <property type="generic name" value="Acepromazine"/>
</dbReference>
<dbReference type="DrugBank" id="DB00346">
    <property type="generic name" value="Alfuzosin"/>
</dbReference>
<dbReference type="DrugBank" id="DB00321">
    <property type="generic name" value="Amitriptyline"/>
</dbReference>
<dbReference type="DrugBank" id="DB00543">
    <property type="generic name" value="Amoxapine"/>
</dbReference>
<dbReference type="DrugBank" id="DB00182">
    <property type="generic name" value="Amphetamine"/>
</dbReference>
<dbReference type="DrugBank" id="DB09229">
    <property type="generic name" value="Aranidipine"/>
</dbReference>
<dbReference type="DrugBank" id="DB01238">
    <property type="generic name" value="Aripiprazole"/>
</dbReference>
<dbReference type="DrugBank" id="DB14185">
    <property type="generic name" value="Aripiprazole lauroxil"/>
</dbReference>
<dbReference type="DrugBank" id="DB09204">
    <property type="generic name" value="Arotinolol"/>
</dbReference>
<dbReference type="DrugBank" id="DB09128">
    <property type="generic name" value="Brexpiprazole"/>
</dbReference>
<dbReference type="DrugBank" id="DB01200">
    <property type="generic name" value="Bromocriptine"/>
</dbReference>
<dbReference type="DrugBank" id="DB00490">
    <property type="generic name" value="Buspirone"/>
</dbReference>
<dbReference type="DrugBank" id="DB00248">
    <property type="generic name" value="Cabergoline"/>
</dbReference>
<dbReference type="DrugBank" id="DB01136">
    <property type="generic name" value="Carvedilol"/>
</dbReference>
<dbReference type="DrugBank" id="DB00477">
    <property type="generic name" value="Chlorpromazine"/>
</dbReference>
<dbReference type="DrugBank" id="DB09202">
    <property type="generic name" value="Cirazoline"/>
</dbReference>
<dbReference type="DrugBank" id="DB00575">
    <property type="generic name" value="Clonidine"/>
</dbReference>
<dbReference type="DrugBank" id="DB15971">
    <property type="generic name" value="Clorotepine"/>
</dbReference>
<dbReference type="DrugBank" id="DB00363">
    <property type="generic name" value="Clozapine"/>
</dbReference>
<dbReference type="DrugBank" id="DB00298">
    <property type="generic name" value="Dapiprazole"/>
</dbReference>
<dbReference type="DrugBank" id="DB01151">
    <property type="generic name" value="Desipramine"/>
</dbReference>
<dbReference type="DrugBank" id="DB01576">
    <property type="generic name" value="Dextroamphetamine"/>
</dbReference>
<dbReference type="DrugBank" id="DB11273">
    <property type="generic name" value="Dihydroergocornine"/>
</dbReference>
<dbReference type="DrugBank" id="DB13345">
    <property type="generic name" value="Dihydroergocristine"/>
</dbReference>
<dbReference type="DrugBank" id="DB00320">
    <property type="generic name" value="Dihydroergotamine"/>
</dbReference>
<dbReference type="DrugBank" id="DB11278">
    <property type="generic name" value="DL-Methylephedrine"/>
</dbReference>
<dbReference type="DrugBank" id="DB00841">
    <property type="generic name" value="Dobutamine"/>
</dbReference>
<dbReference type="DrugBank" id="DB09167">
    <property type="generic name" value="Dosulepin"/>
</dbReference>
<dbReference type="DrugBank" id="DB00590">
    <property type="generic name" value="Doxazosin"/>
</dbReference>
<dbReference type="DrugBank" id="DB01142">
    <property type="generic name" value="Doxepin"/>
</dbReference>
<dbReference type="DrugBank" id="DB04855">
    <property type="generic name" value="Dronedarone"/>
</dbReference>
<dbReference type="DrugBank" id="DB06262">
    <property type="generic name" value="Droxidopa"/>
</dbReference>
<dbReference type="DrugBank" id="DB05492">
    <property type="generic name" value="Epicept NP-1"/>
</dbReference>
<dbReference type="DrugBank" id="DB00668">
    <property type="generic name" value="Epinephrine"/>
</dbReference>
<dbReference type="DrugBank" id="DB01049">
    <property type="generic name" value="Ergoloid mesylate"/>
</dbReference>
<dbReference type="DrugBank" id="DB00696">
    <property type="generic name" value="Ergotamine"/>
</dbReference>
<dbReference type="DrugBank" id="DB01175">
    <property type="generic name" value="Escitalopram"/>
</dbReference>
<dbReference type="DrugBank" id="DB09194">
    <property type="generic name" value="Etoperidone"/>
</dbReference>
<dbReference type="DrugBank" id="DB00800">
    <property type="generic name" value="Fenoldopam"/>
</dbReference>
<dbReference type="DrugBank" id="DB13665">
    <property type="generic name" value="Fluanisone"/>
</dbReference>
<dbReference type="DrugBank" id="DB00458">
    <property type="generic name" value="Imipramine"/>
</dbReference>
<dbReference type="DrugBank" id="DB11577">
    <property type="generic name" value="Indigotindisulfonic acid"/>
</dbReference>
<dbReference type="DrugBank" id="DB00598">
    <property type="generic name" value="Labetalol"/>
</dbReference>
<dbReference type="DrugBank" id="DB06707">
    <property type="generic name" value="Levonordefrin"/>
</dbReference>
<dbReference type="DrugBank" id="DB09195">
    <property type="generic name" value="Lorpiprazole"/>
</dbReference>
<dbReference type="DrugBank" id="DB00408">
    <property type="generic name" value="Loxapine"/>
</dbReference>
<dbReference type="DrugBank" id="DB00934">
    <property type="generic name" value="Maprotiline"/>
</dbReference>
<dbReference type="DrugBank" id="DB11428">
    <property type="generic name" value="Medetomidine"/>
</dbReference>
<dbReference type="DrugBank" id="DB01365">
    <property type="generic name" value="Mephentermine"/>
</dbReference>
<dbReference type="DrugBank" id="DB01577">
    <property type="generic name" value="Metamfetamine"/>
</dbReference>
<dbReference type="DrugBank" id="DB01403">
    <property type="generic name" value="Methotrimeprazine"/>
</dbReference>
<dbReference type="DrugBank" id="DB00723">
    <property type="generic name" value="Methoxamine"/>
</dbReference>
<dbReference type="DrugBank" id="DB06148">
    <property type="generic name" value="Mianserin"/>
</dbReference>
<dbReference type="DrugBank" id="DB00211">
    <property type="generic name" value="Midodrine"/>
</dbReference>
<dbReference type="DrugBank" id="DB00370">
    <property type="generic name" value="Mirtazapine"/>
</dbReference>
<dbReference type="DrugBank" id="DB00745">
    <property type="generic name" value="Modafinil"/>
</dbReference>
<dbReference type="DrugBank" id="DB09205">
    <property type="generic name" value="Moxisylyte"/>
</dbReference>
<dbReference type="DrugBank" id="DB01149">
    <property type="generic name" value="Nefazodone"/>
</dbReference>
<dbReference type="DrugBank" id="DB00622">
    <property type="generic name" value="Nicardipine"/>
</dbReference>
<dbReference type="DrugBank" id="DB00368">
    <property type="generic name" value="Norepinephrine"/>
</dbReference>
<dbReference type="DrugBank" id="DB00540">
    <property type="generic name" value="Nortriptyline"/>
</dbReference>
<dbReference type="DrugBank" id="DB06229">
    <property type="generic name" value="Ocaperidone"/>
</dbReference>
<dbReference type="DrugBank" id="DB00334">
    <property type="generic name" value="Olanzapine"/>
</dbReference>
<dbReference type="DrugBank" id="DB00935">
    <property type="generic name" value="Oxymetazoline"/>
</dbReference>
<dbReference type="DrugBank" id="DB01267">
    <property type="generic name" value="Paliperidone"/>
</dbReference>
<dbReference type="DrugBank" id="DB00715">
    <property type="generic name" value="Paroxetine"/>
</dbReference>
<dbReference type="DrugBank" id="DB01186">
    <property type="generic name" value="Pergolide"/>
</dbReference>
<dbReference type="DrugBank" id="DB01608">
    <property type="generic name" value="Periciazine"/>
</dbReference>
<dbReference type="DrugBank" id="DB08922">
    <property type="generic name" value="Perospirone"/>
</dbReference>
<dbReference type="DrugBank" id="DB01579">
    <property type="generic name" value="Phendimetrazine"/>
</dbReference>
<dbReference type="DrugBank" id="DB00925">
    <property type="generic name" value="Phenoxybenzamine"/>
</dbReference>
<dbReference type="DrugBank" id="DB00692">
    <property type="generic name" value="Phentolamine"/>
</dbReference>
<dbReference type="DrugBank" id="DB00388">
    <property type="generic name" value="Phenylephrine"/>
</dbReference>
<dbReference type="DrugBank" id="DB09286">
    <property type="generic name" value="Pipamperone"/>
</dbReference>
<dbReference type="DrugBank" id="DB06153">
    <property type="generic name" value="Pizotifen"/>
</dbReference>
<dbReference type="DrugBank" id="DB00457">
    <property type="generic name" value="Prazosin"/>
</dbReference>
<dbReference type="DrugBank" id="DB00433">
    <property type="generic name" value="Prochlorperazine"/>
</dbReference>
<dbReference type="DrugBank" id="DB01069">
    <property type="generic name" value="Promethazine"/>
</dbReference>
<dbReference type="DrugBank" id="DB01224">
    <property type="generic name" value="Quetiapine"/>
</dbReference>
<dbReference type="DrugBank" id="DB00908">
    <property type="generic name" value="Quinidine"/>
</dbReference>
<dbReference type="DrugBank" id="DB05469">
    <property type="generic name" value="R450"/>
</dbReference>
<dbReference type="DrugBank" id="DB11124">
    <property type="generic name" value="Racepinephrine"/>
</dbReference>
<dbReference type="DrugBank" id="DB00243">
    <property type="generic name" value="Ranolazine"/>
</dbReference>
<dbReference type="DrugBank" id="DB00734">
    <property type="generic name" value="Risperidone"/>
</dbReference>
<dbReference type="DrugBank" id="DB00268">
    <property type="generic name" value="Ropinirole"/>
</dbReference>
<dbReference type="DrugBank" id="DB06144">
    <property type="generic name" value="Sertindole"/>
</dbReference>
<dbReference type="DrugBank" id="DB06207">
    <property type="generic name" value="Silodosin"/>
</dbReference>
<dbReference type="DrugBank" id="DB06555">
    <property type="generic name" value="Siramesine"/>
</dbReference>
<dbReference type="DrugBank" id="DB09203">
    <property type="generic name" value="Synephrine"/>
</dbReference>
<dbReference type="DrugBank" id="DB00706">
    <property type="generic name" value="Tamsulosin"/>
</dbReference>
<dbReference type="DrugBank" id="DB01162">
    <property type="generic name" value="Terazosin"/>
</dbReference>
<dbReference type="DrugBank" id="DB06764">
    <property type="generic name" value="Tetryzoline"/>
</dbReference>
<dbReference type="DrugBank" id="DB01622">
    <property type="generic name" value="Thioproperazine"/>
</dbReference>
<dbReference type="DrugBank" id="DB00679">
    <property type="generic name" value="Thioridazine"/>
</dbReference>
<dbReference type="DrugBank" id="DB13025">
    <property type="generic name" value="Tiapride"/>
</dbReference>
<dbReference type="DrugBank" id="DB00697">
    <property type="generic name" value="Tizanidine"/>
</dbReference>
<dbReference type="DrugBank" id="DB00726">
    <property type="generic name" value="Trimipramine"/>
</dbReference>
<dbReference type="DrugBank" id="DB00661">
    <property type="generic name" value="Verapamil"/>
</dbReference>
<dbReference type="DrugBank" id="DB09185">
    <property type="generic name" value="Viloxazine"/>
</dbReference>
<dbReference type="DrugBank" id="DB06694">
    <property type="generic name" value="Xylometazoline"/>
</dbReference>
<dbReference type="DrugBank" id="DB00246">
    <property type="generic name" value="Ziprasidone"/>
</dbReference>
<dbReference type="DrugCentral" id="P35368"/>
<dbReference type="GuidetoPHARMACOLOGY" id="23"/>
<dbReference type="GlyCosmos" id="P35368">
    <property type="glycosylation" value="4 sites, No reported glycans"/>
</dbReference>
<dbReference type="GlyGen" id="P35368">
    <property type="glycosylation" value="4 sites"/>
</dbReference>
<dbReference type="iPTMnet" id="P35368"/>
<dbReference type="PhosphoSitePlus" id="P35368"/>
<dbReference type="BioMuta" id="ADRA1B"/>
<dbReference type="DMDM" id="116241241"/>
<dbReference type="MassIVE" id="P35368"/>
<dbReference type="PaxDb" id="9606-ENSP00000306662"/>
<dbReference type="PeptideAtlas" id="P35368"/>
<dbReference type="ProteomicsDB" id="55037"/>
<dbReference type="Antibodypedia" id="16635">
    <property type="antibodies" value="503 antibodies from 37 providers"/>
</dbReference>
<dbReference type="DNASU" id="147"/>
<dbReference type="Ensembl" id="ENST00000306675.5">
    <property type="protein sequence ID" value="ENSP00000306662.3"/>
    <property type="gene ID" value="ENSG00000170214.5"/>
</dbReference>
<dbReference type="GeneID" id="147"/>
<dbReference type="KEGG" id="hsa:147"/>
<dbReference type="MANE-Select" id="ENST00000306675.5">
    <property type="protein sequence ID" value="ENSP00000306662.3"/>
    <property type="RefSeq nucleotide sequence ID" value="NM_000679.4"/>
    <property type="RefSeq protein sequence ID" value="NP_000670.1"/>
</dbReference>
<dbReference type="UCSC" id="uc003lxt.2">
    <property type="organism name" value="human"/>
</dbReference>
<dbReference type="AGR" id="HGNC:278"/>
<dbReference type="CTD" id="147"/>
<dbReference type="DisGeNET" id="147"/>
<dbReference type="GeneCards" id="ADRA1B"/>
<dbReference type="HGNC" id="HGNC:278">
    <property type="gene designation" value="ADRA1B"/>
</dbReference>
<dbReference type="HPA" id="ENSG00000170214">
    <property type="expression patterns" value="Tissue enhanced (brain, liver, lymphoid tissue)"/>
</dbReference>
<dbReference type="MIM" id="104220">
    <property type="type" value="gene"/>
</dbReference>
<dbReference type="neXtProt" id="NX_P35368"/>
<dbReference type="OpenTargets" id="ENSG00000170214"/>
<dbReference type="PharmGKB" id="PA33"/>
<dbReference type="VEuPathDB" id="HostDB:ENSG00000170214"/>
<dbReference type="eggNOG" id="KOG3656">
    <property type="taxonomic scope" value="Eukaryota"/>
</dbReference>
<dbReference type="GeneTree" id="ENSGT00940000156944"/>
<dbReference type="HOGENOM" id="CLU_009579_11_6_1"/>
<dbReference type="InParanoid" id="P35368"/>
<dbReference type="OMA" id="QILRCQC"/>
<dbReference type="OrthoDB" id="5977853at2759"/>
<dbReference type="PAN-GO" id="P35368">
    <property type="GO annotations" value="9 GO annotations based on evolutionary models"/>
</dbReference>
<dbReference type="PhylomeDB" id="P35368"/>
<dbReference type="TreeFam" id="TF331895"/>
<dbReference type="PathwayCommons" id="P35368"/>
<dbReference type="Reactome" id="R-HSA-390696">
    <property type="pathway name" value="Adrenoceptors"/>
</dbReference>
<dbReference type="Reactome" id="R-HSA-416476">
    <property type="pathway name" value="G alpha (q) signalling events"/>
</dbReference>
<dbReference type="Reactome" id="R-HSA-416482">
    <property type="pathway name" value="G alpha (12/13) signalling events"/>
</dbReference>
<dbReference type="SignaLink" id="P35368"/>
<dbReference type="SIGNOR" id="P35368"/>
<dbReference type="BioGRID-ORCS" id="147">
    <property type="hits" value="12 hits in 1162 CRISPR screens"/>
</dbReference>
<dbReference type="ChiTaRS" id="ADRA1B">
    <property type="organism name" value="human"/>
</dbReference>
<dbReference type="GeneWiki" id="Alpha-1B_adrenergic_receptor"/>
<dbReference type="GenomeRNAi" id="147"/>
<dbReference type="Pharos" id="P35368">
    <property type="development level" value="Tclin"/>
</dbReference>
<dbReference type="PRO" id="PR:P35368"/>
<dbReference type="Proteomes" id="UP000005640">
    <property type="component" value="Chromosome 5"/>
</dbReference>
<dbReference type="RNAct" id="P35368">
    <property type="molecule type" value="protein"/>
</dbReference>
<dbReference type="Bgee" id="ENSG00000170214">
    <property type="expression patterns" value="Expressed in right lobe of liver and 93 other cell types or tissues"/>
</dbReference>
<dbReference type="ExpressionAtlas" id="P35368">
    <property type="expression patterns" value="baseline and differential"/>
</dbReference>
<dbReference type="GO" id="GO:0005901">
    <property type="term" value="C:caveola"/>
    <property type="evidence" value="ECO:0007669"/>
    <property type="project" value="UniProtKB-SubCell"/>
</dbReference>
<dbReference type="GO" id="GO:0005737">
    <property type="term" value="C:cytoplasm"/>
    <property type="evidence" value="ECO:0000314"/>
    <property type="project" value="UniProtKB"/>
</dbReference>
<dbReference type="GO" id="GO:0031965">
    <property type="term" value="C:nuclear membrane"/>
    <property type="evidence" value="ECO:0000314"/>
    <property type="project" value="UniProtKB"/>
</dbReference>
<dbReference type="GO" id="GO:0005634">
    <property type="term" value="C:nucleus"/>
    <property type="evidence" value="ECO:0000314"/>
    <property type="project" value="UniProtKB"/>
</dbReference>
<dbReference type="GO" id="GO:0005886">
    <property type="term" value="C:plasma membrane"/>
    <property type="evidence" value="ECO:0000314"/>
    <property type="project" value="UniProtKB"/>
</dbReference>
<dbReference type="GO" id="GO:0004937">
    <property type="term" value="F:alpha1-adrenergic receptor activity"/>
    <property type="evidence" value="ECO:0000318"/>
    <property type="project" value="GO_Central"/>
</dbReference>
<dbReference type="GO" id="GO:0046982">
    <property type="term" value="F:protein heterodimerization activity"/>
    <property type="evidence" value="ECO:0000314"/>
    <property type="project" value="UniProtKB"/>
</dbReference>
<dbReference type="GO" id="GO:0071880">
    <property type="term" value="P:adenylate cyclase-activating adrenergic receptor signaling pathway"/>
    <property type="evidence" value="ECO:0000318"/>
    <property type="project" value="GO_Central"/>
</dbReference>
<dbReference type="GO" id="GO:0007188">
    <property type="term" value="P:adenylate cyclase-modulating G protein-coupled receptor signaling pathway"/>
    <property type="evidence" value="ECO:0000304"/>
    <property type="project" value="ProtInc"/>
</dbReference>
<dbReference type="GO" id="GO:0007267">
    <property type="term" value="P:cell-cell signaling"/>
    <property type="evidence" value="ECO:0000318"/>
    <property type="project" value="GO_Central"/>
</dbReference>
<dbReference type="GO" id="GO:0007186">
    <property type="term" value="P:G protein-coupled receptor signaling pathway"/>
    <property type="evidence" value="ECO:0000304"/>
    <property type="project" value="ProtInc"/>
</dbReference>
<dbReference type="GO" id="GO:0035556">
    <property type="term" value="P:intracellular signal transduction"/>
    <property type="evidence" value="ECO:0000304"/>
    <property type="project" value="ProtInc"/>
</dbReference>
<dbReference type="GO" id="GO:0150099">
    <property type="term" value="P:neuron-glial cell signaling"/>
    <property type="evidence" value="ECO:0000250"/>
    <property type="project" value="ARUK-UCL"/>
</dbReference>
<dbReference type="GO" id="GO:0007200">
    <property type="term" value="P:phospholipase C-activating G protein-coupled receptor signaling pathway"/>
    <property type="evidence" value="ECO:0000318"/>
    <property type="project" value="GO_Central"/>
</dbReference>
<dbReference type="GO" id="GO:0007204">
    <property type="term" value="P:positive regulation of cytosolic calcium ion concentration"/>
    <property type="evidence" value="ECO:0000318"/>
    <property type="project" value="GO_Central"/>
</dbReference>
<dbReference type="GO" id="GO:0043410">
    <property type="term" value="P:positive regulation of MAPK cascade"/>
    <property type="evidence" value="ECO:0000314"/>
    <property type="project" value="UniProtKB"/>
</dbReference>
<dbReference type="GO" id="GO:0055117">
    <property type="term" value="P:regulation of cardiac muscle contraction"/>
    <property type="evidence" value="ECO:0007669"/>
    <property type="project" value="InterPro"/>
</dbReference>
<dbReference type="GO" id="GO:0019229">
    <property type="term" value="P:regulation of vasoconstriction"/>
    <property type="evidence" value="ECO:0007669"/>
    <property type="project" value="InterPro"/>
</dbReference>
<dbReference type="CDD" id="cd15326">
    <property type="entry name" value="7tmA_alpha1B_AR"/>
    <property type="match status" value="1"/>
</dbReference>
<dbReference type="FunFam" id="1.20.1070.10:FF:000027">
    <property type="entry name" value="alpha-1A adrenergic receptor"/>
    <property type="match status" value="1"/>
</dbReference>
<dbReference type="Gene3D" id="1.20.1070.10">
    <property type="entry name" value="Rhodopsin 7-helix transmembrane proteins"/>
    <property type="match status" value="1"/>
</dbReference>
<dbReference type="InterPro" id="IPR002233">
    <property type="entry name" value="ADR_fam"/>
</dbReference>
<dbReference type="InterPro" id="IPR001115">
    <property type="entry name" value="ADRA1B_rcpt"/>
</dbReference>
<dbReference type="InterPro" id="IPR000276">
    <property type="entry name" value="GPCR_Rhodpsn"/>
</dbReference>
<dbReference type="InterPro" id="IPR017452">
    <property type="entry name" value="GPCR_Rhodpsn_7TM"/>
</dbReference>
<dbReference type="PANTHER" id="PTHR24248">
    <property type="entry name" value="ADRENERGIC RECEPTOR-RELATED G-PROTEIN COUPLED RECEPTOR"/>
    <property type="match status" value="1"/>
</dbReference>
<dbReference type="PANTHER" id="PTHR24248:SF17">
    <property type="entry name" value="ALPHA-1B ADRENERGIC RECEPTOR"/>
    <property type="match status" value="1"/>
</dbReference>
<dbReference type="Pfam" id="PF00001">
    <property type="entry name" value="7tm_1"/>
    <property type="match status" value="1"/>
</dbReference>
<dbReference type="PRINTS" id="PR01103">
    <property type="entry name" value="ADRENERGICR"/>
</dbReference>
<dbReference type="PRINTS" id="PR00556">
    <property type="entry name" value="ADRENRGCA1BR"/>
</dbReference>
<dbReference type="PRINTS" id="PR00237">
    <property type="entry name" value="GPCRRHODOPSN"/>
</dbReference>
<dbReference type="SMART" id="SM01381">
    <property type="entry name" value="7TM_GPCR_Srsx"/>
    <property type="match status" value="1"/>
</dbReference>
<dbReference type="SUPFAM" id="SSF81321">
    <property type="entry name" value="Family A G protein-coupled receptor-like"/>
    <property type="match status" value="1"/>
</dbReference>
<dbReference type="PROSITE" id="PS00237">
    <property type="entry name" value="G_PROTEIN_RECEP_F1_1"/>
    <property type="match status" value="1"/>
</dbReference>
<dbReference type="PROSITE" id="PS50262">
    <property type="entry name" value="G_PROTEIN_RECEP_F1_2"/>
    <property type="match status" value="1"/>
</dbReference>
<sequence>MNPDLDTGHNTSAPAHWGELKNANFTGPNQTSSNSTLPQLDITRAISVGLVLGAFILFAIVGNILVILSVACNRHLRTPTNYFIVNLAMADLLLSFTVLPFSAALEVLGYWVLGRIFCDIWAAVDVLCCTASILSLCAISIDRYIGVRYSLQYPTLVTRRKAILALLSVWVLSTVISIGPLLGWKEPAPNDDKECGVTEEPFYALFSSLGSFYIPLAVILVMYCRVYIVAKRTTKNLEAGVMKEMSNSKELTLRIHSKNFHEDTLSSTKAKGHNPRSSIAVKLFKFSREKKAAKTLGIVVGMFILCWLPFFIALPLGSLFSTLKPPDAVFKVVFWLGYFNSCLNPIIYPCSSKEFKRAFVRILGCQCRGRGRRRRRRRRRLGGCAYTYRPWTRGGSLERSQSRKDSLDDSGSCLSGSQRTLPSASPSPGYLGRGAPPPVELCAFPEWKAPGALLSLPAPEPPGRRGRHDSGPLFTFKLLTEPESPGTDGGASNGGCEAAADVANGQPGFKSNMPLAPGQF</sequence>
<gene>
    <name type="primary">ADRA1B</name>
</gene>
<comment type="function">
    <text evidence="6 7">This alpha-adrenergic receptor mediates its action by association with G proteins that activate a phosphatidylinositol-calcium second messenger system. Its effect is mediated by G(q) and G(11) proteins. Nuclear ADRA1A-ADRA1B heterooligomers regulate phenylephrine (PE)-stimulated ERK signaling in cardiac myocytes.</text>
</comment>
<comment type="subunit">
    <text evidence="7 8">Homo- and heterooligomer. Heterooligomerizes with ADRA1B homooligomers in cardiac myocytes (PubMed:22120526). Interacts with CAVIN4 (PubMed:24567387).</text>
</comment>
<comment type="subcellular location">
    <subcellularLocation>
        <location>Nucleus membrane</location>
        <topology>Multi-pass membrane protein</topology>
    </subcellularLocation>
    <subcellularLocation>
        <location evidence="8">Cell membrane</location>
        <topology evidence="3">Multi-pass membrane protein</topology>
    </subcellularLocation>
    <subcellularLocation>
        <location evidence="8">Cytoplasm</location>
    </subcellularLocation>
    <subcellularLocation>
        <location evidence="8">Membrane</location>
        <location evidence="8">Caveola</location>
    </subcellularLocation>
    <text>Location at the nuclear membrane facilitates heterooligomerization and regulates ERK-mediated signaling in cardiac myocytes. signaling in cardiac myocytes. Colocalizes with GNAQ, PLCB1 as well as LAP2 at the nuclear membrane of cardiac myocytes.</text>
</comment>
<comment type="similarity">
    <text evidence="4">Belongs to the G-protein coupled receptor 1 family. Adrenergic receptor subfamily. ADRA1B sub-subfamily.</text>
</comment>
<protein>
    <recommendedName>
        <fullName>Alpha-1B adrenergic receptor</fullName>
    </recommendedName>
    <alternativeName>
        <fullName>Alpha-1B adrenoreceptor</fullName>
        <shortName>Alpha-1B adrenoceptor</shortName>
    </alternativeName>
</protein>
<proteinExistence type="evidence at protein level"/>
<organism>
    <name type="scientific">Homo sapiens</name>
    <name type="common">Human</name>
    <dbReference type="NCBI Taxonomy" id="9606"/>
    <lineage>
        <taxon>Eukaryota</taxon>
        <taxon>Metazoa</taxon>
        <taxon>Chordata</taxon>
        <taxon>Craniata</taxon>
        <taxon>Vertebrata</taxon>
        <taxon>Euteleostomi</taxon>
        <taxon>Mammalia</taxon>
        <taxon>Eutheria</taxon>
        <taxon>Euarchontoglires</taxon>
        <taxon>Primates</taxon>
        <taxon>Haplorrhini</taxon>
        <taxon>Catarrhini</taxon>
        <taxon>Hominidae</taxon>
        <taxon>Homo</taxon>
    </lineage>
</organism>
<feature type="chain" id="PRO_0000069069" description="Alpha-1B adrenergic receptor">
    <location>
        <begin position="1"/>
        <end position="520"/>
    </location>
</feature>
<feature type="topological domain" description="Extracellular" evidence="1">
    <location>
        <begin position="1"/>
        <end position="45"/>
    </location>
</feature>
<feature type="transmembrane region" description="Helical; Name=1" evidence="1">
    <location>
        <begin position="46"/>
        <end position="70"/>
    </location>
</feature>
<feature type="topological domain" description="Cytoplasmic" evidence="1">
    <location>
        <begin position="71"/>
        <end position="83"/>
    </location>
</feature>
<feature type="transmembrane region" description="Helical; Name=2" evidence="1">
    <location>
        <begin position="84"/>
        <end position="105"/>
    </location>
</feature>
<feature type="topological domain" description="Extracellular" evidence="1">
    <location>
        <begin position="106"/>
        <end position="115"/>
    </location>
</feature>
<feature type="transmembrane region" description="Helical; Name=3" evidence="1">
    <location>
        <begin position="116"/>
        <end position="141"/>
    </location>
</feature>
<feature type="topological domain" description="Cytoplasmic" evidence="1">
    <location>
        <begin position="142"/>
        <end position="161"/>
    </location>
</feature>
<feature type="transmembrane region" description="Helical; Name=4" evidence="1">
    <location>
        <begin position="162"/>
        <end position="184"/>
    </location>
</feature>
<feature type="topological domain" description="Extracellular" evidence="1">
    <location>
        <begin position="185"/>
        <end position="201"/>
    </location>
</feature>
<feature type="transmembrane region" description="Helical; Name=5" evidence="1">
    <location>
        <begin position="202"/>
        <end position="224"/>
    </location>
</feature>
<feature type="topological domain" description="Cytoplasmic" evidence="1">
    <location>
        <begin position="225"/>
        <end position="295"/>
    </location>
</feature>
<feature type="transmembrane region" description="Helical; Name=6" evidence="1">
    <location>
        <begin position="296"/>
        <end position="319"/>
    </location>
</feature>
<feature type="topological domain" description="Extracellular" evidence="1">
    <location>
        <begin position="320"/>
        <end position="326"/>
    </location>
</feature>
<feature type="transmembrane region" description="Helical; Name=7" evidence="1">
    <location>
        <begin position="327"/>
        <end position="351"/>
    </location>
</feature>
<feature type="topological domain" description="Cytoplasmic" evidence="1">
    <location>
        <begin position="352"/>
        <end position="520"/>
    </location>
</feature>
<feature type="region of interest" description="Disordered" evidence="5">
    <location>
        <begin position="394"/>
        <end position="432"/>
    </location>
</feature>
<feature type="region of interest" description="Disordered" evidence="5">
    <location>
        <begin position="479"/>
        <end position="520"/>
    </location>
</feature>
<feature type="short sequence motif" description="Nuclear localization signal">
    <location>
        <begin position="368"/>
        <end position="380"/>
    </location>
</feature>
<feature type="modified residue" description="Phosphothreonine" evidence="2">
    <location>
        <position position="264"/>
    </location>
</feature>
<feature type="lipid moiety-binding region" description="S-palmitoyl cysteine" evidence="3">
    <location>
        <position position="365"/>
    </location>
</feature>
<feature type="glycosylation site" description="N-linked (GlcNAc...) asparagine" evidence="3">
    <location>
        <position position="10"/>
    </location>
</feature>
<feature type="glycosylation site" description="N-linked (GlcNAc...) asparagine" evidence="3">
    <location>
        <position position="24"/>
    </location>
</feature>
<feature type="glycosylation site" description="N-linked (GlcNAc...) asparagine" evidence="3">
    <location>
        <position position="29"/>
    </location>
</feature>
<feature type="glycosylation site" description="N-linked (GlcNAc...) asparagine" evidence="3">
    <location>
        <position position="34"/>
    </location>
</feature>
<feature type="disulfide bond" evidence="4">
    <location>
        <begin position="118"/>
        <end position="195"/>
    </location>
</feature>
<feature type="sequence variant" id="VAR_019510" description="In dbSNP:rs8192448.">
    <original>V</original>
    <variation>G</variation>
    <location>
        <position position="51"/>
    </location>
</feature>
<feature type="mutagenesis site" description="Abolishes targeting to the nuclear membrane of cardiac myocytes." evidence="7">
    <original>RGRGRRRRRRRRR</original>
    <variation>AGAGAAAAAAAAA</variation>
    <location>
        <begin position="368"/>
        <end position="380"/>
    </location>
</feature>
<feature type="sequence conflict" description="In Ref. 1 and 3; AAB59485." evidence="9" ref="1 3">
    <location>
        <position position="371"/>
    </location>
</feature>
<feature type="sequence conflict" description="In Ref. 1." evidence="9" ref="1">
    <original>AAAD</original>
    <variation>PRH</variation>
    <location>
        <begin position="498"/>
        <end position="501"/>
    </location>
</feature>
<reference key="1">
    <citation type="journal article" date="1992" name="J. Biol. Chem.">
        <title>Genomic organization and expression of the human alpha 1B-adrenergic receptor.</title>
        <authorList>
            <person name="Ramarao C.S."/>
            <person name="Denker J.M."/>
            <person name="Perez D.M."/>
            <person name="Gaivin R.J."/>
            <person name="Riek R.P."/>
            <person name="Graham R.M."/>
        </authorList>
    </citation>
    <scope>NUCLEOTIDE SEQUENCE [GENOMIC DNA]</scope>
</reference>
<reference key="2">
    <citation type="journal article" date="1994" name="Mol. Pharmacol.">
        <title>The alpha 1-adrenergic receptor that mediates smooth muscle contraction in human prostate has the pharmacological properties of the cloned human alpha 1c subtype.</title>
        <authorList>
            <person name="Forray C."/>
            <person name="Bard J.A."/>
            <person name="Wetzel J.M."/>
            <person name="Chiu G."/>
            <person name="Shapiro E."/>
            <person name="Tang R."/>
            <person name="Lepor H."/>
            <person name="Hartig P.R."/>
            <person name="Weinshank R.L."/>
            <person name="Branchek T.A."/>
            <person name="Gluchowski C."/>
        </authorList>
    </citation>
    <scope>NUCLEOTIDE SEQUENCE [MRNA]</scope>
    <source>
        <tissue>Brain</tissue>
    </source>
</reference>
<reference key="3">
    <citation type="journal article" date="1995" name="J. Pharmacol. Exp. Ther.">
        <title>Cloning and pharmacological characterization of human alpha-1 adrenergic receptors: sequence corrections and direct comparison with other species homologues.</title>
        <authorList>
            <person name="Schwinn D.A."/>
            <person name="Johnston G.I."/>
            <person name="Page S.O."/>
            <person name="Mosley M.J."/>
            <person name="Wilson K.H."/>
            <person name="Worman N.P."/>
            <person name="Campbell S."/>
            <person name="Fidock M.D."/>
            <person name="Furness L.M."/>
            <person name="Parry-Smith D.J."/>
            <person name="Peter B."/>
            <person name="Bailey D.S."/>
        </authorList>
    </citation>
    <scope>NUCLEOTIDE SEQUENCE [MRNA]</scope>
</reference>
<reference key="4">
    <citation type="submission" date="2007-12" db="EMBL/GenBank/DDBJ databases">
        <authorList>
            <consortium name="NIEHS SNPs program"/>
        </authorList>
    </citation>
    <scope>NUCLEOTIDE SEQUENCE [GENOMIC DNA]</scope>
</reference>
<reference key="5">
    <citation type="journal article" date="2004" name="Genome Res.">
        <title>The status, quality, and expansion of the NIH full-length cDNA project: the Mammalian Gene Collection (MGC).</title>
        <authorList>
            <consortium name="The MGC Project Team"/>
        </authorList>
    </citation>
    <scope>NUCLEOTIDE SEQUENCE [LARGE SCALE MRNA]</scope>
</reference>
<reference key="6">
    <citation type="journal article" date="2008" name="Circ. Res.">
        <title>Nuclear alpha1-adrenergic receptors signal activated ERK localization to caveolae in adult cardiac myocytes.</title>
        <authorList>
            <person name="Wright C.D."/>
            <person name="Chen Q."/>
            <person name="Baye N.L."/>
            <person name="Huang Y."/>
            <person name="Healy C.L."/>
            <person name="Kasinathan S."/>
            <person name="O'Connell T.D."/>
        </authorList>
    </citation>
    <scope>SUBCELLULAR LOCATION</scope>
    <scope>FUNCTION</scope>
</reference>
<reference key="7">
    <citation type="journal article" date="2012" name="Cell. Signal.">
        <title>Nuclear localization drives alpha1-adrenergic receptor oligomerization and signaling in cardiac myocytes.</title>
        <authorList>
            <person name="Wright C.D."/>
            <person name="Wu S.C."/>
            <person name="Dahl E.F."/>
            <person name="Sazama A.J."/>
            <person name="O'Connell T.D."/>
        </authorList>
    </citation>
    <scope>SUBCELLULAR LOCATION</scope>
    <scope>SUBUNIT</scope>
    <scope>FUNCTION</scope>
    <scope>MUTAGENESIS OF 368-ARG--ARG-380</scope>
</reference>
<reference key="8">
    <citation type="journal article" date="2014" name="Proc. Natl. Acad. Sci. U.S.A.">
        <title>MURC/Cavin-4 facilitates recruitment of ERK to caveolae and concentric cardiac hypertrophy induced by alpha1-adrenergic receptors.</title>
        <authorList>
            <person name="Ogata T."/>
            <person name="Naito D."/>
            <person name="Nakanishi N."/>
            <person name="Hayashi Y.K."/>
            <person name="Taniguchi T."/>
            <person name="Miyagawa K."/>
            <person name="Hamaoka T."/>
            <person name="Maruyama N."/>
            <person name="Matoba S."/>
            <person name="Ikeda K."/>
            <person name="Yamada H."/>
            <person name="Oh H."/>
            <person name="Ueyama T."/>
        </authorList>
    </citation>
    <scope>INTERACTION WITH CAVIN4</scope>
    <scope>SUBCELLULAR LOCATION</scope>
</reference>